<feature type="chain" id="PRO_0000184470" description="Putative T-box protein 7">
    <location>
        <begin position="1"/>
        <end position="335"/>
    </location>
</feature>
<feature type="DNA-binding region" description="T-box" evidence="1">
    <location>
        <begin position="73"/>
        <end position="246"/>
    </location>
</feature>
<feature type="splice variant" id="VSP_059559" description="In isoform a." evidence="2">
    <location>
        <begin position="1"/>
        <end position="36"/>
    </location>
</feature>
<protein>
    <recommendedName>
        <fullName>Putative T-box protein 7</fullName>
    </recommendedName>
</protein>
<name>TBX7_CAEEL</name>
<gene>
    <name evidence="4" type="primary">tbx-7</name>
    <name evidence="4" type="ORF">ZK328.8</name>
</gene>
<comment type="subcellular location">
    <subcellularLocation>
        <location evidence="1">Nucleus</location>
    </subcellularLocation>
</comment>
<comment type="alternative products">
    <event type="alternative splicing"/>
    <isoform>
        <id>Q95PX3-1</id>
        <name evidence="4">b</name>
        <sequence type="displayed"/>
    </isoform>
    <isoform>
        <id>Q95PX3-2</id>
        <name evidence="3">a</name>
        <sequence type="described" ref="VSP_059559"/>
    </isoform>
</comment>
<sequence>MYFQILVLMSEGYGRSLFSEKHFPHDRQLLPPFTTTMSLGSFFSFPASSAFFDRKKDDGVIDNPNVELVNRNLWSTFLECGTEMIITKKGRRMFPLVKLKLSGLDKNSNYTIIMEMISVDKLRYKFWNGNWIVAGVGEHHPLPTCFVHPQSPRSGEWWMTDGVDFKMAKLSNNPFNNDGHIVLNSMHRYNPRFHIVRADSSGQPILASLKTFSFKETEFIAVTAYQNDVVTKCKIDNNPFAKGFRNIDTVRKRKMNQIISTPPASEDEEPEVKRTKSEIEAVMFSDPKVPQMSLQLISQWQEALLSTIVQIPITNQKSSSERKSGFGVVDLLGSS</sequence>
<organism>
    <name type="scientific">Caenorhabditis elegans</name>
    <dbReference type="NCBI Taxonomy" id="6239"/>
    <lineage>
        <taxon>Eukaryota</taxon>
        <taxon>Metazoa</taxon>
        <taxon>Ecdysozoa</taxon>
        <taxon>Nematoda</taxon>
        <taxon>Chromadorea</taxon>
        <taxon>Rhabditida</taxon>
        <taxon>Rhabditina</taxon>
        <taxon>Rhabditomorpha</taxon>
        <taxon>Rhabditoidea</taxon>
        <taxon>Rhabditidae</taxon>
        <taxon>Peloderinae</taxon>
        <taxon>Caenorhabditis</taxon>
    </lineage>
</organism>
<keyword id="KW-0025">Alternative splicing</keyword>
<keyword id="KW-0238">DNA-binding</keyword>
<keyword id="KW-0539">Nucleus</keyword>
<keyword id="KW-1185">Reference proteome</keyword>
<keyword id="KW-0804">Transcription</keyword>
<keyword id="KW-0805">Transcription regulation</keyword>
<proteinExistence type="inferred from homology"/>
<reference key="1">
    <citation type="journal article" date="1998" name="Science">
        <title>Genome sequence of the nematode C. elegans: a platform for investigating biology.</title>
        <authorList>
            <consortium name="The C. elegans sequencing consortium"/>
        </authorList>
    </citation>
    <scope>NUCLEOTIDE SEQUENCE [LARGE SCALE GENOMIC DNA]</scope>
    <source>
        <strain>Bristol N2</strain>
    </source>
</reference>
<dbReference type="EMBL" id="BX284603">
    <property type="protein sequence ID" value="CTQ86630.1"/>
    <property type="molecule type" value="Genomic_DNA"/>
</dbReference>
<dbReference type="EMBL" id="BX284603">
    <property type="protein sequence ID" value="CTQ86631.1"/>
    <property type="molecule type" value="Genomic_DNA"/>
</dbReference>
<dbReference type="PIR" id="C56530">
    <property type="entry name" value="C56530"/>
</dbReference>
<dbReference type="PIR" id="T29011">
    <property type="entry name" value="T29011"/>
</dbReference>
<dbReference type="RefSeq" id="NP_001299930.1">
    <property type="nucleotide sequence ID" value="NM_001313001.1"/>
</dbReference>
<dbReference type="RefSeq" id="NP_001299931.1">
    <property type="nucleotide sequence ID" value="NM_001313002.1"/>
</dbReference>
<dbReference type="RefSeq" id="NP_001368539.1">
    <molecule id="Q95PX3-2"/>
    <property type="nucleotide sequence ID" value="NM_001379739.1"/>
</dbReference>
<dbReference type="RefSeq" id="NP_001368540.1">
    <molecule id="Q95PX3-1"/>
    <property type="nucleotide sequence ID" value="NM_001379738.1"/>
</dbReference>
<dbReference type="SMR" id="Q95PX3"/>
<dbReference type="FunCoup" id="Q95PX3">
    <property type="interactions" value="9"/>
</dbReference>
<dbReference type="STRING" id="6239.ZK328.8b.2"/>
<dbReference type="PaxDb" id="6239-ZK328.8.1"/>
<dbReference type="EnsemblMetazoa" id="ZK328.8a.1">
    <molecule id="Q95PX3-2"/>
    <property type="protein sequence ID" value="ZK328.8a.1"/>
    <property type="gene ID" value="WBGene00006544"/>
</dbReference>
<dbReference type="EnsemblMetazoa" id="ZK328.8b.1">
    <molecule id="Q95PX3-1"/>
    <property type="protein sequence ID" value="ZK328.8b.1"/>
    <property type="gene ID" value="WBGene00006544"/>
</dbReference>
<dbReference type="GeneID" id="260030"/>
<dbReference type="UCSC" id="ZK328.8">
    <molecule id="Q95PX3-1"/>
    <property type="organism name" value="c. elegans"/>
</dbReference>
<dbReference type="AGR" id="WB:WBGene00006544"/>
<dbReference type="WormBase" id="ZK328.8a">
    <molecule id="Q95PX3-2"/>
    <property type="protein sequence ID" value="CE50285"/>
    <property type="gene ID" value="WBGene00006544"/>
    <property type="gene designation" value="tbx-7"/>
</dbReference>
<dbReference type="WormBase" id="ZK328.8b">
    <molecule id="Q95PX3-1"/>
    <property type="protein sequence ID" value="CE50302"/>
    <property type="gene ID" value="WBGene00006544"/>
    <property type="gene designation" value="tbx-7"/>
</dbReference>
<dbReference type="eggNOG" id="KOG3585">
    <property type="taxonomic scope" value="Eukaryota"/>
</dbReference>
<dbReference type="GeneTree" id="ENSGT00940000163374"/>
<dbReference type="HOGENOM" id="CLU_861194_0_0_1"/>
<dbReference type="InParanoid" id="Q95PX3"/>
<dbReference type="OMA" id="KSKYIVM"/>
<dbReference type="OrthoDB" id="7442607at2759"/>
<dbReference type="PhylomeDB" id="Q95PX3"/>
<dbReference type="Reactome" id="R-CEL-2032785">
    <property type="pathway name" value="YAP1- and WWTR1 (TAZ)-stimulated gene expression"/>
</dbReference>
<dbReference type="PRO" id="PR:Q95PX3"/>
<dbReference type="Proteomes" id="UP000001940">
    <property type="component" value="Chromosome III"/>
</dbReference>
<dbReference type="Bgee" id="WBGene00006544">
    <property type="expression patterns" value="Expressed in embryo and 4 other cell types or tissues"/>
</dbReference>
<dbReference type="GO" id="GO:0000785">
    <property type="term" value="C:chromatin"/>
    <property type="evidence" value="ECO:0000318"/>
    <property type="project" value="GO_Central"/>
</dbReference>
<dbReference type="GO" id="GO:0005634">
    <property type="term" value="C:nucleus"/>
    <property type="evidence" value="ECO:0000250"/>
    <property type="project" value="WormBase"/>
</dbReference>
<dbReference type="GO" id="GO:0005667">
    <property type="term" value="C:transcription regulator complex"/>
    <property type="evidence" value="ECO:0000250"/>
    <property type="project" value="WormBase"/>
</dbReference>
<dbReference type="GO" id="GO:0000981">
    <property type="term" value="F:DNA-binding transcription factor activity, RNA polymerase II-specific"/>
    <property type="evidence" value="ECO:0000250"/>
    <property type="project" value="WormBase"/>
</dbReference>
<dbReference type="GO" id="GO:0000978">
    <property type="term" value="F:RNA polymerase II cis-regulatory region sequence-specific DNA binding"/>
    <property type="evidence" value="ECO:0000318"/>
    <property type="project" value="GO_Central"/>
</dbReference>
<dbReference type="GO" id="GO:0001708">
    <property type="term" value="P:cell fate specification"/>
    <property type="evidence" value="ECO:0000318"/>
    <property type="project" value="GO_Central"/>
</dbReference>
<dbReference type="GO" id="GO:0045893">
    <property type="term" value="P:positive regulation of DNA-templated transcription"/>
    <property type="evidence" value="ECO:0007669"/>
    <property type="project" value="InterPro"/>
</dbReference>
<dbReference type="GO" id="GO:0006357">
    <property type="term" value="P:regulation of transcription by RNA polymerase II"/>
    <property type="evidence" value="ECO:0000250"/>
    <property type="project" value="WormBase"/>
</dbReference>
<dbReference type="FunFam" id="2.60.40.820:FF:000015">
    <property type="entry name" value="T-box transcription factor mls-1"/>
    <property type="match status" value="1"/>
</dbReference>
<dbReference type="Gene3D" id="2.60.40.820">
    <property type="entry name" value="Transcription factor, T-box"/>
    <property type="match status" value="1"/>
</dbReference>
<dbReference type="InterPro" id="IPR008967">
    <property type="entry name" value="p53-like_TF_DNA-bd_sf"/>
</dbReference>
<dbReference type="InterPro" id="IPR046360">
    <property type="entry name" value="T-box_DNA-bd"/>
</dbReference>
<dbReference type="InterPro" id="IPR036960">
    <property type="entry name" value="T-box_sf"/>
</dbReference>
<dbReference type="InterPro" id="IPR001699">
    <property type="entry name" value="TF_T-box"/>
</dbReference>
<dbReference type="InterPro" id="IPR018186">
    <property type="entry name" value="TF_T-box_CS"/>
</dbReference>
<dbReference type="PANTHER" id="PTHR11267">
    <property type="entry name" value="T-BOX PROTEIN-RELATED"/>
    <property type="match status" value="1"/>
</dbReference>
<dbReference type="PANTHER" id="PTHR11267:SF198">
    <property type="entry name" value="T-BOX TRANSCRIPTION FACTOR TBX6L"/>
    <property type="match status" value="1"/>
</dbReference>
<dbReference type="Pfam" id="PF00907">
    <property type="entry name" value="T-box"/>
    <property type="match status" value="1"/>
</dbReference>
<dbReference type="PRINTS" id="PR00937">
    <property type="entry name" value="TBOX"/>
</dbReference>
<dbReference type="SMART" id="SM00425">
    <property type="entry name" value="TBOX"/>
    <property type="match status" value="1"/>
</dbReference>
<dbReference type="SUPFAM" id="SSF49417">
    <property type="entry name" value="p53-like transcription factors"/>
    <property type="match status" value="1"/>
</dbReference>
<dbReference type="PROSITE" id="PS01283">
    <property type="entry name" value="TBOX_1"/>
    <property type="match status" value="1"/>
</dbReference>
<dbReference type="PROSITE" id="PS01264">
    <property type="entry name" value="TBOX_2"/>
    <property type="match status" value="1"/>
</dbReference>
<dbReference type="PROSITE" id="PS50252">
    <property type="entry name" value="TBOX_3"/>
    <property type="match status" value="1"/>
</dbReference>
<evidence type="ECO:0000255" key="1">
    <source>
        <dbReference type="PROSITE-ProRule" id="PRU00201"/>
    </source>
</evidence>
<evidence type="ECO:0000305" key="2"/>
<evidence type="ECO:0000312" key="3">
    <source>
        <dbReference type="WormBase" id="ZK328.8a"/>
    </source>
</evidence>
<evidence type="ECO:0000312" key="4">
    <source>
        <dbReference type="WormBase" id="ZK328.8b"/>
    </source>
</evidence>
<accession>Q95PX3</accession>
<accession>A0A0K3ARF9</accession>
<accession>A0A0K3AUZ0</accession>
<accession>Q23467</accession>